<name>PKS1_MYCTU</name>
<feature type="chain" id="PRO_0000406600" description="Putative inactive phenolphthiocerol synthesis polyketide synthase type I Pks1">
    <location>
        <begin position="1"/>
        <end position="1616"/>
    </location>
</feature>
<feature type="domain" description="PKS/mFAS DH" evidence="3">
    <location>
        <begin position="445"/>
        <end position="719"/>
    </location>
</feature>
<feature type="domain" description="Carrier" evidence="2">
    <location>
        <begin position="1514"/>
        <end position="1589"/>
    </location>
</feature>
<feature type="region of interest" description="Acyltransferase" evidence="1">
    <location>
        <begin position="83"/>
        <end position="397"/>
    </location>
</feature>
<feature type="region of interest" description="Dehydratase" evidence="1">
    <location>
        <begin position="445"/>
        <end position="605"/>
    </location>
</feature>
<feature type="region of interest" description="N-terminal hotdog fold" evidence="3">
    <location>
        <begin position="445"/>
        <end position="567"/>
    </location>
</feature>
<feature type="region of interest" description="C-terminal hotdog fold" evidence="3">
    <location>
        <begin position="579"/>
        <end position="719"/>
    </location>
</feature>
<feature type="region of interest" description="Enoylreductase" evidence="1">
    <location>
        <begin position="910"/>
        <end position="1215"/>
    </location>
</feature>
<feature type="region of interest" description="Beta-ketoacyl reductase" evidence="1">
    <location>
        <begin position="1228"/>
        <end position="1409"/>
    </location>
</feature>
<feature type="region of interest" description="Disordered" evidence="4">
    <location>
        <begin position="1588"/>
        <end position="1616"/>
    </location>
</feature>
<feature type="compositionally biased region" description="Polar residues" evidence="4">
    <location>
        <begin position="1588"/>
        <end position="1604"/>
    </location>
</feature>
<feature type="active site" description="For acyltransferase activity" evidence="1">
    <location>
        <position position="174"/>
    </location>
</feature>
<feature type="active site" description="Proton acceptor; for dehydratase activity" evidence="3">
    <location>
        <position position="477"/>
    </location>
</feature>
<feature type="active site" description="Proton donor; for dehydratase activity" evidence="3">
    <location>
        <position position="640"/>
    </location>
</feature>
<feature type="binding site" evidence="1">
    <location>
        <begin position="1040"/>
        <end position="1057"/>
    </location>
    <ligand>
        <name>NADP(+)</name>
        <dbReference type="ChEBI" id="CHEBI:58349"/>
    </ligand>
</feature>
<feature type="binding site" evidence="1">
    <location>
        <begin position="1229"/>
        <end position="1244"/>
    </location>
    <ligand>
        <name>NADP(+)</name>
        <dbReference type="ChEBI" id="CHEBI:58349"/>
    </ligand>
</feature>
<feature type="modified residue" description="O-(pantetheine 4'-phosphoryl)serine" evidence="2">
    <location>
        <position position="1549"/>
    </location>
</feature>
<gene>
    <name type="primary">pks1</name>
    <name type="ordered locus">Rv2946c</name>
</gene>
<keyword id="KW-0012">Acyltransferase</keyword>
<keyword id="KW-0276">Fatty acid metabolism</keyword>
<keyword id="KW-0443">Lipid metabolism</keyword>
<keyword id="KW-0596">Phosphopantetheine</keyword>
<keyword id="KW-0597">Phosphoprotein</keyword>
<keyword id="KW-1185">Reference proteome</keyword>
<keyword id="KW-0808">Transferase</keyword>
<reference key="1">
    <citation type="journal article" date="1998" name="Nature">
        <title>Deciphering the biology of Mycobacterium tuberculosis from the complete genome sequence.</title>
        <authorList>
            <person name="Cole S.T."/>
            <person name="Brosch R."/>
            <person name="Parkhill J."/>
            <person name="Garnier T."/>
            <person name="Churcher C.M."/>
            <person name="Harris D.E."/>
            <person name="Gordon S.V."/>
            <person name="Eiglmeier K."/>
            <person name="Gas S."/>
            <person name="Barry C.E. III"/>
            <person name="Tekaia F."/>
            <person name="Badcock K."/>
            <person name="Basham D."/>
            <person name="Brown D."/>
            <person name="Chillingworth T."/>
            <person name="Connor R."/>
            <person name="Davies R.M."/>
            <person name="Devlin K."/>
            <person name="Feltwell T."/>
            <person name="Gentles S."/>
            <person name="Hamlin N."/>
            <person name="Holroyd S."/>
            <person name="Hornsby T."/>
            <person name="Jagels K."/>
            <person name="Krogh A."/>
            <person name="McLean J."/>
            <person name="Moule S."/>
            <person name="Murphy L.D."/>
            <person name="Oliver S."/>
            <person name="Osborne J."/>
            <person name="Quail M.A."/>
            <person name="Rajandream M.A."/>
            <person name="Rogers J."/>
            <person name="Rutter S."/>
            <person name="Seeger K."/>
            <person name="Skelton S."/>
            <person name="Squares S."/>
            <person name="Squares R."/>
            <person name="Sulston J.E."/>
            <person name="Taylor K."/>
            <person name="Whitehead S."/>
            <person name="Barrell B.G."/>
        </authorList>
    </citation>
    <scope>NUCLEOTIDE SEQUENCE [LARGE SCALE GENOMIC DNA]</scope>
    <source>
        <strain>ATCC 25618 / H37Rv</strain>
    </source>
</reference>
<reference key="2">
    <citation type="journal article" date="2002" name="J. Biol. Chem.">
        <title>Role of the pks15/1 gene in the biosynthesis of phenolglycolipids in the Mycobacterium tuberculosis complex. Evidence that all strains synthesize glycosylated p-hydroxybenzoic methyl esters and that strains devoid of phenolglycolipids harbor a frameshift mutation in the pks15/1 gene.</title>
        <authorList>
            <person name="Constant P."/>
            <person name="Perez E."/>
            <person name="Malaga W."/>
            <person name="Laneelle M.A."/>
            <person name="Saurel O."/>
            <person name="Daffe M."/>
            <person name="Guilhot C."/>
        </authorList>
    </citation>
    <scope>NATURAL FRAMESHIFT</scope>
    <source>
        <strain>ATCC 25618 / H37Rv</strain>
    </source>
</reference>
<reference key="3">
    <citation type="journal article" date="2003" name="J. Bacteriol.">
        <title>Attenuation of Mycobacterium tuberculosis by disruption of a mas-like gene or a chalcone synthase-like gene, which causes deficiency in dimycocerosyl phthiocerol synthesis.</title>
        <authorList>
            <person name="Sirakova T.D."/>
            <person name="Dubey V.S."/>
            <person name="Cynamon M.H."/>
            <person name="Kolattukudy P.E."/>
        </authorList>
    </citation>
    <scope>DISRUPTION PHENOTYPE</scope>
    <scope>PUTATIVE FUNCTION</scope>
    <source>
        <strain>ATCC 25618 / H37Rv</strain>
    </source>
</reference>
<reference key="4">
    <citation type="journal article" date="2008" name="BMC Syst. Biol.">
        <title>targetTB: a target identification pipeline for Mycobacterium tuberculosis through an interactome, reactome and genome-scale structural analysis.</title>
        <authorList>
            <person name="Raman K."/>
            <person name="Yeturu K."/>
            <person name="Chandra N."/>
        </authorList>
    </citation>
    <scope>IDENTIFICATION AS A DRUG TARGET [LARGE SCALE ANALYSIS]</scope>
</reference>
<reference key="5">
    <citation type="journal article" date="2011" name="Mol. Cell. Proteomics">
        <title>Proteogenomic analysis of Mycobacterium tuberculosis by high resolution mass spectrometry.</title>
        <authorList>
            <person name="Kelkar D.S."/>
            <person name="Kumar D."/>
            <person name="Kumar P."/>
            <person name="Balakrishnan L."/>
            <person name="Muthusamy B."/>
            <person name="Yadav A.K."/>
            <person name="Shrivastava P."/>
            <person name="Marimuthu A."/>
            <person name="Anand S."/>
            <person name="Sundaram H."/>
            <person name="Kingsbury R."/>
            <person name="Harsha H.C."/>
            <person name="Nair B."/>
            <person name="Prasad T.S."/>
            <person name="Chauhan D.S."/>
            <person name="Katoch K."/>
            <person name="Katoch V.M."/>
            <person name="Kumar P."/>
            <person name="Chaerkady R."/>
            <person name="Ramachandran S."/>
            <person name="Dash D."/>
            <person name="Pandey A."/>
        </authorList>
    </citation>
    <scope>IDENTIFICATION BY MASS SPECTROMETRY [LARGE SCALE ANALYSIS]</scope>
    <source>
        <strain>ATCC 25618 / H37Rv</strain>
    </source>
</reference>
<organism>
    <name type="scientific">Mycobacterium tuberculosis (strain ATCC 25618 / H37Rv)</name>
    <dbReference type="NCBI Taxonomy" id="83332"/>
    <lineage>
        <taxon>Bacteria</taxon>
        <taxon>Bacillati</taxon>
        <taxon>Actinomycetota</taxon>
        <taxon>Actinomycetes</taxon>
        <taxon>Mycobacteriales</taxon>
        <taxon>Mycobacteriaceae</taxon>
        <taxon>Mycobacterium</taxon>
        <taxon>Mycobacterium tuberculosis complex</taxon>
    </lineage>
</organism>
<dbReference type="EMBL" id="AL123456">
    <property type="protein sequence ID" value="CCP45750.1"/>
    <property type="molecule type" value="Genomic_DNA"/>
</dbReference>
<dbReference type="RefSeq" id="NP_217462.1">
    <property type="nucleotide sequence ID" value="NC_000962.3"/>
</dbReference>
<dbReference type="RefSeq" id="WP_003917711.1">
    <property type="nucleotide sequence ID" value="NC_000962.3"/>
</dbReference>
<dbReference type="SMR" id="P96285"/>
<dbReference type="STRING" id="83332.Rv2946c"/>
<dbReference type="PaxDb" id="83332-Rv2946c"/>
<dbReference type="GeneID" id="888122"/>
<dbReference type="KEGG" id="mtu:Rv2946c"/>
<dbReference type="KEGG" id="mtv:RVBD_2946c"/>
<dbReference type="PATRIC" id="fig|83332.111.peg.3280"/>
<dbReference type="TubercuList" id="Rv2946c"/>
<dbReference type="eggNOG" id="COG0604">
    <property type="taxonomic scope" value="Bacteria"/>
</dbReference>
<dbReference type="eggNOG" id="COG1020">
    <property type="taxonomic scope" value="Bacteria"/>
</dbReference>
<dbReference type="eggNOG" id="COG3321">
    <property type="taxonomic scope" value="Bacteria"/>
</dbReference>
<dbReference type="eggNOG" id="COG4221">
    <property type="taxonomic scope" value="Bacteria"/>
</dbReference>
<dbReference type="InParanoid" id="P96285"/>
<dbReference type="OrthoDB" id="4516163at2"/>
<dbReference type="PhylomeDB" id="P96285"/>
<dbReference type="BRENDA" id="2.3.1.261">
    <property type="organism ID" value="3445"/>
</dbReference>
<dbReference type="UniPathway" id="UPA00094"/>
<dbReference type="Proteomes" id="UP000001584">
    <property type="component" value="Chromosome"/>
</dbReference>
<dbReference type="GO" id="GO:0005886">
    <property type="term" value="C:plasma membrane"/>
    <property type="evidence" value="ECO:0007005"/>
    <property type="project" value="MTBBASE"/>
</dbReference>
<dbReference type="GO" id="GO:0004312">
    <property type="term" value="F:fatty acid synthase activity"/>
    <property type="evidence" value="ECO:0000318"/>
    <property type="project" value="GO_Central"/>
</dbReference>
<dbReference type="GO" id="GO:0016491">
    <property type="term" value="F:oxidoreductase activity"/>
    <property type="evidence" value="ECO:0007669"/>
    <property type="project" value="InterPro"/>
</dbReference>
<dbReference type="GO" id="GO:0031177">
    <property type="term" value="F:phosphopantetheine binding"/>
    <property type="evidence" value="ECO:0007669"/>
    <property type="project" value="InterPro"/>
</dbReference>
<dbReference type="GO" id="GO:0071766">
    <property type="term" value="P:Actinobacterium-type cell wall biogenesis"/>
    <property type="evidence" value="ECO:0000315"/>
    <property type="project" value="UniProtKB"/>
</dbReference>
<dbReference type="GO" id="GO:0071770">
    <property type="term" value="P:DIM/DIP cell wall layer assembly"/>
    <property type="evidence" value="ECO:0000315"/>
    <property type="project" value="MTBBASE"/>
</dbReference>
<dbReference type="GO" id="GO:0006633">
    <property type="term" value="P:fatty acid biosynthetic process"/>
    <property type="evidence" value="ECO:0000318"/>
    <property type="project" value="GO_Central"/>
</dbReference>
<dbReference type="GO" id="GO:0008610">
    <property type="term" value="P:lipid biosynthetic process"/>
    <property type="evidence" value="ECO:0000315"/>
    <property type="project" value="UniProtKB"/>
</dbReference>
<dbReference type="CDD" id="cd05195">
    <property type="entry name" value="enoyl_red"/>
    <property type="match status" value="1"/>
</dbReference>
<dbReference type="CDD" id="cd08956">
    <property type="entry name" value="KR_3_FAS_SDR_x"/>
    <property type="match status" value="1"/>
</dbReference>
<dbReference type="FunFam" id="3.40.50.720:FF:000209">
    <property type="entry name" value="Polyketide synthase Pks12"/>
    <property type="match status" value="1"/>
</dbReference>
<dbReference type="FunFam" id="3.40.366.10:FF:000002">
    <property type="entry name" value="Probable polyketide synthase 2"/>
    <property type="match status" value="1"/>
</dbReference>
<dbReference type="FunFam" id="3.10.129.110:FF:000003">
    <property type="entry name" value="Probable polyketide synthase pks1"/>
    <property type="match status" value="1"/>
</dbReference>
<dbReference type="FunFam" id="3.40.50.11460:FF:000001">
    <property type="entry name" value="Probable polyketide synthase pks1"/>
    <property type="match status" value="1"/>
</dbReference>
<dbReference type="FunFam" id="3.90.180.10:FF:000032">
    <property type="entry name" value="Probable polyketide synthase pks1"/>
    <property type="match status" value="1"/>
</dbReference>
<dbReference type="FunFam" id="1.10.1200.10:FF:000007">
    <property type="entry name" value="Probable polyketide synthase pks17"/>
    <property type="match status" value="1"/>
</dbReference>
<dbReference type="FunFam" id="3.40.50.720:FF:000381">
    <property type="entry name" value="Probable polyketide synthase pks17"/>
    <property type="match status" value="1"/>
</dbReference>
<dbReference type="Gene3D" id="3.30.70.3290">
    <property type="match status" value="1"/>
</dbReference>
<dbReference type="Gene3D" id="3.40.50.11460">
    <property type="match status" value="1"/>
</dbReference>
<dbReference type="Gene3D" id="1.10.1200.10">
    <property type="entry name" value="ACP-like"/>
    <property type="match status" value="1"/>
</dbReference>
<dbReference type="Gene3D" id="3.40.366.10">
    <property type="entry name" value="Malonyl-Coenzyme A Acyl Carrier Protein, domain 2"/>
    <property type="match status" value="1"/>
</dbReference>
<dbReference type="Gene3D" id="3.90.180.10">
    <property type="entry name" value="Medium-chain alcohol dehydrogenases, catalytic domain"/>
    <property type="match status" value="1"/>
</dbReference>
<dbReference type="Gene3D" id="3.40.50.720">
    <property type="entry name" value="NAD(P)-binding Rossmann-like Domain"/>
    <property type="match status" value="1"/>
</dbReference>
<dbReference type="Gene3D" id="3.10.129.110">
    <property type="entry name" value="Polyketide synthase dehydratase"/>
    <property type="match status" value="1"/>
</dbReference>
<dbReference type="InterPro" id="IPR001227">
    <property type="entry name" value="Ac_transferase_dom_sf"/>
</dbReference>
<dbReference type="InterPro" id="IPR036736">
    <property type="entry name" value="ACP-like_sf"/>
</dbReference>
<dbReference type="InterPro" id="IPR014043">
    <property type="entry name" value="Acyl_transferase_dom"/>
</dbReference>
<dbReference type="InterPro" id="IPR016035">
    <property type="entry name" value="Acyl_Trfase/lysoPLipase"/>
</dbReference>
<dbReference type="InterPro" id="IPR013154">
    <property type="entry name" value="ADH-like_N"/>
</dbReference>
<dbReference type="InterPro" id="IPR011032">
    <property type="entry name" value="GroES-like_sf"/>
</dbReference>
<dbReference type="InterPro" id="IPR016036">
    <property type="entry name" value="Malonyl_transacylase_ACP-bd"/>
</dbReference>
<dbReference type="InterPro" id="IPR036291">
    <property type="entry name" value="NAD(P)-bd_dom_sf"/>
</dbReference>
<dbReference type="InterPro" id="IPR042104">
    <property type="entry name" value="PKS_dehydratase_sf"/>
</dbReference>
<dbReference type="InterPro" id="IPR020807">
    <property type="entry name" value="PKS_DH"/>
</dbReference>
<dbReference type="InterPro" id="IPR049551">
    <property type="entry name" value="PKS_DH_C"/>
</dbReference>
<dbReference type="InterPro" id="IPR049552">
    <property type="entry name" value="PKS_DH_N"/>
</dbReference>
<dbReference type="InterPro" id="IPR020843">
    <property type="entry name" value="PKS_ER"/>
</dbReference>
<dbReference type="InterPro" id="IPR013968">
    <property type="entry name" value="PKS_KR"/>
</dbReference>
<dbReference type="InterPro" id="IPR049900">
    <property type="entry name" value="PKS_mFAS_DH"/>
</dbReference>
<dbReference type="InterPro" id="IPR050091">
    <property type="entry name" value="PKS_NRPS_Biosynth_Enz"/>
</dbReference>
<dbReference type="InterPro" id="IPR020806">
    <property type="entry name" value="PKS_PP-bd"/>
</dbReference>
<dbReference type="InterPro" id="IPR009081">
    <property type="entry name" value="PP-bd_ACP"/>
</dbReference>
<dbReference type="InterPro" id="IPR006162">
    <property type="entry name" value="Ppantetheine_attach_site"/>
</dbReference>
<dbReference type="InterPro" id="IPR055123">
    <property type="entry name" value="SpnB-like_Rossmann"/>
</dbReference>
<dbReference type="PANTHER" id="PTHR43775">
    <property type="entry name" value="FATTY ACID SYNTHASE"/>
    <property type="match status" value="1"/>
</dbReference>
<dbReference type="PANTHER" id="PTHR43775:SF51">
    <property type="entry name" value="INACTIVE PHENOLPHTHIOCEROL SYNTHESIS POLYKETIDE SYNTHASE TYPE I PKS1-RELATED"/>
    <property type="match status" value="1"/>
</dbReference>
<dbReference type="Pfam" id="PF00698">
    <property type="entry name" value="Acyl_transf_1"/>
    <property type="match status" value="1"/>
</dbReference>
<dbReference type="Pfam" id="PF08240">
    <property type="entry name" value="ADH_N"/>
    <property type="match status" value="1"/>
</dbReference>
<dbReference type="Pfam" id="PF13602">
    <property type="entry name" value="ADH_zinc_N_2"/>
    <property type="match status" value="1"/>
</dbReference>
<dbReference type="Pfam" id="PF22621">
    <property type="entry name" value="CurL-like_PKS_C"/>
    <property type="match status" value="1"/>
</dbReference>
<dbReference type="Pfam" id="PF08659">
    <property type="entry name" value="KR"/>
    <property type="match status" value="1"/>
</dbReference>
<dbReference type="Pfam" id="PF21089">
    <property type="entry name" value="PKS_DH_N"/>
    <property type="match status" value="1"/>
</dbReference>
<dbReference type="Pfam" id="PF00550">
    <property type="entry name" value="PP-binding"/>
    <property type="match status" value="1"/>
</dbReference>
<dbReference type="Pfam" id="PF14765">
    <property type="entry name" value="PS-DH"/>
    <property type="match status" value="1"/>
</dbReference>
<dbReference type="Pfam" id="PF22953">
    <property type="entry name" value="SpnB_Rossmann"/>
    <property type="match status" value="1"/>
</dbReference>
<dbReference type="SMART" id="SM00827">
    <property type="entry name" value="PKS_AT"/>
    <property type="match status" value="1"/>
</dbReference>
<dbReference type="SMART" id="SM00826">
    <property type="entry name" value="PKS_DH"/>
    <property type="match status" value="1"/>
</dbReference>
<dbReference type="SMART" id="SM00829">
    <property type="entry name" value="PKS_ER"/>
    <property type="match status" value="1"/>
</dbReference>
<dbReference type="SMART" id="SM00822">
    <property type="entry name" value="PKS_KR"/>
    <property type="match status" value="1"/>
</dbReference>
<dbReference type="SMART" id="SM00823">
    <property type="entry name" value="PKS_PP"/>
    <property type="match status" value="1"/>
</dbReference>
<dbReference type="SMART" id="SM01294">
    <property type="entry name" value="PKS_PP_betabranch"/>
    <property type="match status" value="1"/>
</dbReference>
<dbReference type="SUPFAM" id="SSF47336">
    <property type="entry name" value="ACP-like"/>
    <property type="match status" value="1"/>
</dbReference>
<dbReference type="SUPFAM" id="SSF52151">
    <property type="entry name" value="FabD/lysophospholipase-like"/>
    <property type="match status" value="1"/>
</dbReference>
<dbReference type="SUPFAM" id="SSF50129">
    <property type="entry name" value="GroES-like"/>
    <property type="match status" value="1"/>
</dbReference>
<dbReference type="SUPFAM" id="SSF51735">
    <property type="entry name" value="NAD(P)-binding Rossmann-fold domains"/>
    <property type="match status" value="3"/>
</dbReference>
<dbReference type="SUPFAM" id="SSF55048">
    <property type="entry name" value="Probable ACP-binding domain of malonyl-CoA ACP transacylase"/>
    <property type="match status" value="1"/>
</dbReference>
<dbReference type="PROSITE" id="PS50075">
    <property type="entry name" value="CARRIER"/>
    <property type="match status" value="1"/>
</dbReference>
<dbReference type="PROSITE" id="PS00012">
    <property type="entry name" value="PHOSPHOPANTETHEINE"/>
    <property type="match status" value="1"/>
</dbReference>
<dbReference type="PROSITE" id="PS52019">
    <property type="entry name" value="PKS_MFAS_DH"/>
    <property type="match status" value="1"/>
</dbReference>
<proteinExistence type="evidence at protein level"/>
<comment type="function">
    <text>May play a role in phthiocerol biosynthesis.</text>
</comment>
<comment type="cofactor">
    <cofactor evidence="1">
        <name>pantetheine 4'-phosphate</name>
        <dbReference type="ChEBI" id="CHEBI:47942"/>
    </cofactor>
    <text evidence="1">Binds 1 phosphopantetheine covalently.</text>
</comment>
<comment type="pathway">
    <text>Lipid metabolism; fatty acid biosynthesis.</text>
</comment>
<comment type="disruption phenotype">
    <text evidence="5">Disruption of pks1 abolishes the production of phthiocerol dimycocerosate (DIM) on the cell envelope, but the production of mycocerosic acid is not deficient. The pks10 mutants show a major attenuation of virulence.</text>
</comment>
<comment type="miscellaneous">
    <text>Was identified as a high-confidence drug target.</text>
</comment>
<comment type="caution">
    <text evidence="6">M.bovis (strains ATCC BAA-935 / AF2122/97 and BCG / Pasteur 1173P2) and M.marinum (strain ATCC BAA-535 / M) have a single fused pks15/1 ORF, but M.tuberculosis (strains ATCC 25618 / H37Rv and CDC 1551 / Oshkosh) have 2 separate ORFs. This is due to the natural deletion of a single base, a guanine, that causes a frameshift and thus the two ORFs, pks15 and pks1, instead of pks15/1. This frameshift led to the inactivation of Pks15/1, which in turn caused the inability of these strains to elongate the putative p-hydroxybenzoic acid precursor and thus to produce phenolphthiocerol derivatives.</text>
</comment>
<sequence>MISARSAEALTAQAGRLMAHVQANPGLDPIDVGCSLASRSVFEHRAVVVGASREQLIAGLAGLAAGEPGAGVAVGQPGSVGKTVVVFPGQGAQRIGMGRELYGELPVFAQAFDAVADELDRHLRLPLRDVIWGADADLLDSTEFAQPALFAVEVASFAVLRDWGVLPDFVMGHSVGELAAAHAAGVLTLADAAMLVVARGRLMQALPAGGAMVAVAASEDEVEPLLGEGVGIAAINAPESVVISGAQAAANAIADRFAAQGRRVHQLAVSHAFHSPLMEPMLEEFARVAARVQAREPQLGLVSNVTGELAGPDFGSAQYWVDHVRRPVRFADSARHLQTLGATHFIEAGPGSGLTGSIEQSLAPAEAMVVSMLGKDRPELASALGAAGQVFTTGVPVQWSAVFAGSGGRRVQLPTYAFQRRRFWETPGADGPADAAGLGLGATEHALLGAVVERPDSDEVVLTGRLSLADQPWLADHVVNGVVLFPGAGFVELVIRAGDEVGCALIEELVLAAPLVMHPGVGVQVQVVVGAADESGHRAVSVYSRGDQSQGWLLNAEGMLGVAAAETPMDLSVWPPEGAESVDISDGYAQLAERGYAYGPAFQGLVAIWRRGSELFAEVVAPGEAGVAVDRMGMHPAVLDAVLHALGLAVEKTQASTETRLPFCWRGVSLHAGGAGRVRARFASAGADAISVDVCDATGLPVLTVRSLVTRPITAEQLRAAVTAAGGASDQGPLEVVWSPISVVSGGANGSAPPAPVSWADFCAGSDGDASVVVWELESAGGQASSVVGSVYAATHTALEVLQSWLGADRAATLVVLTHGGVGLAGEDISDLAAAAVWGMARSAQAENPGRIVLIDTDAAVDASVLAGVGEPQLLVRGGTVHAPRLSPAPALLALPAAESAWRLAAGGGGTLEDLVIQPCPEVQAPLQAGQVRVAVAAVGVNFRDVVAALGMYPGQAPPLGAEGAGVVLETGPEVTDLAVGDAVMGFLGGAGPLAVVDQQLVTRVPQGWSFAQAAAVPVVFLTAWYGLADLAEIKAGESVLIHAGTGGVGMAAVQLARQWGVEVFVTASRGKWDTLRAMGFDDDHIGDSRTCEFEEKFLAVTEGRGVDVVLDSLAGEFVDASLRLLVRGGRFLEMGKTDIRDAQEIAANYPGVQYRAFDLSEAGPARMQEMLAEVRELFDTRELHRLPVTTWDVRCAPAAFRFMSQARHIGKVVLTMPSALADRLADGTVVITGATGAVGGVLARHLVGAYGVRHLVLASRRGDRAEGAAELAADLTEAGAKVQVVACDVADRAAVAGLFAQLSREYPPVRGVIHAAGVLDDAVITSLTPDRIDTVLRAKVDAAWNLHQATSDLDLSMFALCSSIAATVGSPGQGNYSAANAFLDGLAAHRQAAGLAGISLAWGLWEQPGGMTAHLSSRDLARMSRSGLAPMSPAEAVELFDAALAIDHPLAVATLLDRAALDARAQAGALPALFSGLARRPRRRQIDDTGDATSSKSALAQRLHGLAADEQLELLVGLVCLQAAAVLGRPSAEDVDPDTEFGDLGFDSLTAVELRNRLKTATGLTLPPTVIFDHPTPTAVAEYVAQQMSGSRPTESGDPTSQVVEPAAAEVSVHA</sequence>
<protein>
    <recommendedName>
        <fullName>Putative inactive phenolphthiocerol synthesis polyketide synthase type I Pks1</fullName>
    </recommendedName>
</protein>
<evidence type="ECO:0000250" key="1"/>
<evidence type="ECO:0000255" key="2">
    <source>
        <dbReference type="PROSITE-ProRule" id="PRU00258"/>
    </source>
</evidence>
<evidence type="ECO:0000255" key="3">
    <source>
        <dbReference type="PROSITE-ProRule" id="PRU01363"/>
    </source>
</evidence>
<evidence type="ECO:0000256" key="4">
    <source>
        <dbReference type="SAM" id="MobiDB-lite"/>
    </source>
</evidence>
<evidence type="ECO:0000269" key="5">
    <source>
    </source>
</evidence>
<evidence type="ECO:0000305" key="6"/>
<accession>P96285</accession>
<accession>L0TB41</accession>